<dbReference type="EMBL" id="FM200053">
    <property type="protein sequence ID" value="CAR60054.1"/>
    <property type="molecule type" value="Genomic_DNA"/>
</dbReference>
<dbReference type="RefSeq" id="WP_001562341.1">
    <property type="nucleotide sequence ID" value="NC_011147.1"/>
</dbReference>
<dbReference type="SMR" id="B5BC62"/>
<dbReference type="KEGG" id="sek:SSPA1857"/>
<dbReference type="HOGENOM" id="CLU_047123_0_0_6"/>
<dbReference type="Proteomes" id="UP000001869">
    <property type="component" value="Chromosome"/>
</dbReference>
<dbReference type="GO" id="GO:0042597">
    <property type="term" value="C:periplasmic space"/>
    <property type="evidence" value="ECO:0007669"/>
    <property type="project" value="UniProtKB-SubCell"/>
</dbReference>
<dbReference type="GO" id="GO:0051301">
    <property type="term" value="P:cell division"/>
    <property type="evidence" value="ECO:0007669"/>
    <property type="project" value="UniProtKB-UniRule"/>
</dbReference>
<dbReference type="GO" id="GO:0017038">
    <property type="term" value="P:protein import"/>
    <property type="evidence" value="ECO:0007669"/>
    <property type="project" value="InterPro"/>
</dbReference>
<dbReference type="FunFam" id="2.120.10.30:FF:000022">
    <property type="entry name" value="Tol-Pal system protein TolB"/>
    <property type="match status" value="1"/>
</dbReference>
<dbReference type="FunFam" id="3.40.50.10070:FF:000001">
    <property type="entry name" value="Tol-Pal system protein TolB"/>
    <property type="match status" value="1"/>
</dbReference>
<dbReference type="Gene3D" id="2.120.10.30">
    <property type="entry name" value="TolB, C-terminal domain"/>
    <property type="match status" value="1"/>
</dbReference>
<dbReference type="Gene3D" id="3.40.50.10070">
    <property type="entry name" value="TolB, N-terminal domain"/>
    <property type="match status" value="1"/>
</dbReference>
<dbReference type="HAMAP" id="MF_00671">
    <property type="entry name" value="TolB"/>
    <property type="match status" value="1"/>
</dbReference>
<dbReference type="InterPro" id="IPR011042">
    <property type="entry name" value="6-blade_b-propeller_TolB-like"/>
</dbReference>
<dbReference type="InterPro" id="IPR011659">
    <property type="entry name" value="PD40"/>
</dbReference>
<dbReference type="InterPro" id="IPR014167">
    <property type="entry name" value="Tol-Pal_TolB"/>
</dbReference>
<dbReference type="InterPro" id="IPR007195">
    <property type="entry name" value="TolB_N"/>
</dbReference>
<dbReference type="NCBIfam" id="TIGR02800">
    <property type="entry name" value="propeller_TolB"/>
    <property type="match status" value="1"/>
</dbReference>
<dbReference type="PANTHER" id="PTHR36842:SF1">
    <property type="entry name" value="PROTEIN TOLB"/>
    <property type="match status" value="1"/>
</dbReference>
<dbReference type="PANTHER" id="PTHR36842">
    <property type="entry name" value="PROTEIN TOLB HOMOLOG"/>
    <property type="match status" value="1"/>
</dbReference>
<dbReference type="Pfam" id="PF07676">
    <property type="entry name" value="PD40"/>
    <property type="match status" value="4"/>
</dbReference>
<dbReference type="Pfam" id="PF04052">
    <property type="entry name" value="TolB_N"/>
    <property type="match status" value="1"/>
</dbReference>
<dbReference type="SUPFAM" id="SSF52964">
    <property type="entry name" value="TolB, N-terminal domain"/>
    <property type="match status" value="1"/>
</dbReference>
<dbReference type="SUPFAM" id="SSF69304">
    <property type="entry name" value="Tricorn protease N-terminal domain"/>
    <property type="match status" value="1"/>
</dbReference>
<organism>
    <name type="scientific">Salmonella paratyphi A (strain AKU_12601)</name>
    <dbReference type="NCBI Taxonomy" id="554290"/>
    <lineage>
        <taxon>Bacteria</taxon>
        <taxon>Pseudomonadati</taxon>
        <taxon>Pseudomonadota</taxon>
        <taxon>Gammaproteobacteria</taxon>
        <taxon>Enterobacterales</taxon>
        <taxon>Enterobacteriaceae</taxon>
        <taxon>Salmonella</taxon>
    </lineage>
</organism>
<protein>
    <recommendedName>
        <fullName evidence="1">Tol-Pal system protein TolB</fullName>
    </recommendedName>
</protein>
<proteinExistence type="inferred from homology"/>
<sequence>MKQALRVAFGFLMLWAAVLHAEVRIEITQGVDSARPIGVVPFKWAGPGAAPEDIGGIVAADLRNSGKFNPLDRSRLPQQPATAQEVQPTAWSALGIDAVVVGQVTPNPDGSYNVAYQLVDTGGAPGTVLAQNSYKVNKQWLRYAGHTASDEVFEKLTGIKGAFRTRIAYVVQTNGGQFPYELRVSDYDGYNQFVVHRSPQPLMSPAWSPDGSKLAYVTFESGRSALVIQTLANGAVRQVASFPRHNGAPAFSPDGTKLAFALSKTGSLNLYVMDLASGQIRQITDGRSNNTEPTWFPDSQTLAFTSDQAGRPQVYKMNINGGAAQRITWEGSQNQDADVSSDGKFMVMVSSNNGQQHIAKQDLVTGGVQVLSSTFLDETPSLAPNGTMVIYSSSQGMGSVLNLVSTDGRFKARLPATDGQVKSPAWSPYL</sequence>
<keyword id="KW-0131">Cell cycle</keyword>
<keyword id="KW-0132">Cell division</keyword>
<keyword id="KW-0574">Periplasm</keyword>
<keyword id="KW-0732">Signal</keyword>
<comment type="function">
    <text evidence="1">Part of the Tol-Pal system, which plays a role in outer membrane invagination during cell division and is important for maintaining outer membrane integrity. TolB occupies a key intermediary position in the Tol-Pal system because it communicates directly with both membrane-embedded components, Pal in the outer membrane and TolA in the inner membrane.</text>
</comment>
<comment type="subunit">
    <text evidence="1">The Tol-Pal system is composed of five core proteins: the inner membrane proteins TolA, TolQ and TolR, the periplasmic protein TolB and the outer membrane protein Pal. They form a network linking the inner and outer membranes and the peptidoglycan layer.</text>
</comment>
<comment type="subcellular location">
    <subcellularLocation>
        <location evidence="1">Periplasm</location>
    </subcellularLocation>
</comment>
<comment type="similarity">
    <text evidence="1">Belongs to the TolB family.</text>
</comment>
<feature type="signal peptide" evidence="1">
    <location>
        <begin position="1"/>
        <end position="21"/>
    </location>
</feature>
<feature type="chain" id="PRO_1000131535" description="Tol-Pal system protein TolB" evidence="1">
    <location>
        <begin position="22"/>
        <end position="430"/>
    </location>
</feature>
<gene>
    <name evidence="1" type="primary">tolB</name>
    <name type="ordered locus">SSPA1857</name>
</gene>
<accession>B5BC62</accession>
<evidence type="ECO:0000255" key="1">
    <source>
        <dbReference type="HAMAP-Rule" id="MF_00671"/>
    </source>
</evidence>
<reference key="1">
    <citation type="journal article" date="2009" name="BMC Genomics">
        <title>Pseudogene accumulation in the evolutionary histories of Salmonella enterica serovars Paratyphi A and Typhi.</title>
        <authorList>
            <person name="Holt K.E."/>
            <person name="Thomson N.R."/>
            <person name="Wain J."/>
            <person name="Langridge G.C."/>
            <person name="Hasan R."/>
            <person name="Bhutta Z.A."/>
            <person name="Quail M.A."/>
            <person name="Norbertczak H."/>
            <person name="Walker D."/>
            <person name="Simmonds M."/>
            <person name="White B."/>
            <person name="Bason N."/>
            <person name="Mungall K."/>
            <person name="Dougan G."/>
            <person name="Parkhill J."/>
        </authorList>
    </citation>
    <scope>NUCLEOTIDE SEQUENCE [LARGE SCALE GENOMIC DNA]</scope>
    <source>
        <strain>AKU_12601</strain>
    </source>
</reference>
<name>TOLB_SALPK</name>